<evidence type="ECO:0000255" key="1"/>
<evidence type="ECO:0000269" key="2">
    <source>
    </source>
</evidence>
<evidence type="ECO:0000269" key="3">
    <source>
    </source>
</evidence>
<evidence type="ECO:0000269" key="4">
    <source>
    </source>
</evidence>
<evidence type="ECO:0000305" key="5"/>
<comment type="function">
    <text evidence="4">Component of the biogenesis of lysosome-related organelles complex-1 (BLOC-1), a complex involved in endosomal cargo sorting.</text>
</comment>
<comment type="subunit">
    <text evidence="4">Component of the biogenesis of lysosome-related organelles complex-1 (BLOC-1) composed of at least BLI1, BLS1, CNL1, KXD1, SNN1 and VAB2.</text>
</comment>
<comment type="interaction">
    <interactant intactId="EBI-28775">
        <id>P48232</id>
    </interactant>
    <interactant intactId="EBI-26722">
        <id>P35727</id>
        <label>BLI1</label>
    </interactant>
    <organismsDiffer>false</organismsDiffer>
    <experiments>4</experiments>
</comment>
<comment type="interaction">
    <interactant intactId="EBI-28775">
        <id>P48232</id>
    </interactant>
    <interactant intactId="EBI-22275">
        <id>P40003</id>
        <label>VAB2</label>
    </interactant>
    <organismsDiffer>false</organismsDiffer>
    <experiments>4</experiments>
</comment>
<comment type="subcellular location">
    <subcellularLocation>
        <location evidence="2">Endosome</location>
    </subcellularLocation>
</comment>
<comment type="miscellaneous">
    <text evidence="3">Present with 195 molecules/cell in log phase SD medium.</text>
</comment>
<comment type="similarity">
    <text evidence="5">Belongs to the SNAPIN family.</text>
</comment>
<accession>P48232</accession>
<accession>D6W193</accession>
<gene>
    <name type="primary">SNN1</name>
    <name type="ordered locus">YNL086W</name>
    <name type="ORF">N2254</name>
</gene>
<dbReference type="EMBL" id="X89016">
    <property type="protein sequence ID" value="CAA61424.1"/>
    <property type="molecule type" value="Genomic_DNA"/>
</dbReference>
<dbReference type="EMBL" id="Z71362">
    <property type="protein sequence ID" value="CAA95962.1"/>
    <property type="molecule type" value="Genomic_DNA"/>
</dbReference>
<dbReference type="EMBL" id="AY558520">
    <property type="protein sequence ID" value="AAS56846.1"/>
    <property type="molecule type" value="Genomic_DNA"/>
</dbReference>
<dbReference type="EMBL" id="BK006947">
    <property type="protein sequence ID" value="DAA10459.1"/>
    <property type="molecule type" value="Genomic_DNA"/>
</dbReference>
<dbReference type="PIR" id="S57536">
    <property type="entry name" value="S57536"/>
</dbReference>
<dbReference type="RefSeq" id="NP_014313.1">
    <property type="nucleotide sequence ID" value="NM_001182924.1"/>
</dbReference>
<dbReference type="SMR" id="P48232"/>
<dbReference type="BioGRID" id="35737">
    <property type="interactions" value="131"/>
</dbReference>
<dbReference type="ComplexPortal" id="CPX-1153">
    <property type="entry name" value="BLOC-1 complex"/>
</dbReference>
<dbReference type="DIP" id="DIP-1188N"/>
<dbReference type="FunCoup" id="P48232">
    <property type="interactions" value="43"/>
</dbReference>
<dbReference type="IntAct" id="P48232">
    <property type="interactions" value="14"/>
</dbReference>
<dbReference type="MINT" id="P48232"/>
<dbReference type="STRING" id="4932.YNL086W"/>
<dbReference type="iPTMnet" id="P48232"/>
<dbReference type="PaxDb" id="4932-YNL086W"/>
<dbReference type="PeptideAtlas" id="P48232"/>
<dbReference type="EnsemblFungi" id="YNL086W_mRNA">
    <property type="protein sequence ID" value="YNL086W"/>
    <property type="gene ID" value="YNL086W"/>
</dbReference>
<dbReference type="GeneID" id="855638"/>
<dbReference type="KEGG" id="sce:YNL086W"/>
<dbReference type="AGR" id="SGD:S000005030"/>
<dbReference type="SGD" id="S000005030">
    <property type="gene designation" value="SNN1"/>
</dbReference>
<dbReference type="VEuPathDB" id="FungiDB:YNL086W"/>
<dbReference type="eggNOG" id="ENOG502S7PY">
    <property type="taxonomic scope" value="Eukaryota"/>
</dbReference>
<dbReference type="HOGENOM" id="CLU_178727_0_0_1"/>
<dbReference type="InParanoid" id="P48232"/>
<dbReference type="OMA" id="IHPIELC"/>
<dbReference type="OrthoDB" id="4065244at2759"/>
<dbReference type="BioCyc" id="YEAST:G3O-33115-MONOMER"/>
<dbReference type="BioGRID-ORCS" id="855638">
    <property type="hits" value="2 hits in 10 CRISPR screens"/>
</dbReference>
<dbReference type="PRO" id="PR:P48232"/>
<dbReference type="Proteomes" id="UP000002311">
    <property type="component" value="Chromosome XIV"/>
</dbReference>
<dbReference type="RNAct" id="P48232">
    <property type="molecule type" value="protein"/>
</dbReference>
<dbReference type="GO" id="GO:0031083">
    <property type="term" value="C:BLOC-1 complex"/>
    <property type="evidence" value="ECO:0000314"/>
    <property type="project" value="SGD"/>
</dbReference>
<dbReference type="GO" id="GO:0005768">
    <property type="term" value="C:endosome"/>
    <property type="evidence" value="ECO:0000314"/>
    <property type="project" value="ComplexPortal"/>
</dbReference>
<dbReference type="GO" id="GO:0007032">
    <property type="term" value="P:endosome organization"/>
    <property type="evidence" value="ECO:0000315"/>
    <property type="project" value="SGD"/>
</dbReference>
<dbReference type="GO" id="GO:0032880">
    <property type="term" value="P:regulation of protein localization"/>
    <property type="evidence" value="ECO:0000315"/>
    <property type="project" value="SGD"/>
</dbReference>
<reference key="1">
    <citation type="journal article" date="1996" name="Yeast">
        <title>The sequence of a 17,933 bp segment of Saccharomyces cerevisiae chromosome XIV contains the RHO2, TOP2, MKT1 and END3 genes and five new open reading frames.</title>
        <authorList>
            <person name="Soler-Mira A."/>
            <person name="Saiz J.E."/>
            <person name="Ballesta J.P.G."/>
            <person name="Remacha M.A."/>
        </authorList>
    </citation>
    <scope>NUCLEOTIDE SEQUENCE [GENOMIC DNA]</scope>
    <source>
        <strain>ATCC 96604 / S288c / FY1679</strain>
    </source>
</reference>
<reference key="2">
    <citation type="journal article" date="1997" name="Nature">
        <title>The nucleotide sequence of Saccharomyces cerevisiae chromosome XIV and its evolutionary implications.</title>
        <authorList>
            <person name="Philippsen P."/>
            <person name="Kleine K."/>
            <person name="Poehlmann R."/>
            <person name="Duesterhoeft A."/>
            <person name="Hamberg K."/>
            <person name="Hegemann J.H."/>
            <person name="Obermaier B."/>
            <person name="Urrestarazu L.A."/>
            <person name="Aert R."/>
            <person name="Albermann K."/>
            <person name="Altmann R."/>
            <person name="Andre B."/>
            <person name="Baladron V."/>
            <person name="Ballesta J.P.G."/>
            <person name="Becam A.-M."/>
            <person name="Beinhauer J.D."/>
            <person name="Boskovic J."/>
            <person name="Buitrago M.J."/>
            <person name="Bussereau F."/>
            <person name="Coster F."/>
            <person name="Crouzet M."/>
            <person name="D'Angelo M."/>
            <person name="Dal Pero F."/>
            <person name="De Antoni A."/>
            <person name="del Rey F."/>
            <person name="Doignon F."/>
            <person name="Domdey H."/>
            <person name="Dubois E."/>
            <person name="Fiedler T.A."/>
            <person name="Fleig U."/>
            <person name="Floeth M."/>
            <person name="Fritz C."/>
            <person name="Gaillardin C."/>
            <person name="Garcia-Cantalejo J.M."/>
            <person name="Glansdorff N."/>
            <person name="Goffeau A."/>
            <person name="Gueldener U."/>
            <person name="Herbert C.J."/>
            <person name="Heumann K."/>
            <person name="Heuss-Neitzel D."/>
            <person name="Hilbert H."/>
            <person name="Hinni K."/>
            <person name="Iraqui Houssaini I."/>
            <person name="Jacquet M."/>
            <person name="Jimenez A."/>
            <person name="Jonniaux J.-L."/>
            <person name="Karpfinger-Hartl L."/>
            <person name="Lanfranchi G."/>
            <person name="Lepingle A."/>
            <person name="Levesque H."/>
            <person name="Lyck R."/>
            <person name="Maftahi M."/>
            <person name="Mallet L."/>
            <person name="Maurer C.T.C."/>
            <person name="Messenguy F."/>
            <person name="Mewes H.-W."/>
            <person name="Moestl D."/>
            <person name="Nasr F."/>
            <person name="Nicaud J.-M."/>
            <person name="Niedenthal R.K."/>
            <person name="Pandolfo D."/>
            <person name="Pierard A."/>
            <person name="Piravandi E."/>
            <person name="Planta R.J."/>
            <person name="Pohl T.M."/>
            <person name="Purnelle B."/>
            <person name="Rebischung C."/>
            <person name="Remacha M.A."/>
            <person name="Revuelta J.L."/>
            <person name="Rinke M."/>
            <person name="Saiz J.E."/>
            <person name="Sartorello F."/>
            <person name="Scherens B."/>
            <person name="Sen-Gupta M."/>
            <person name="Soler-Mira A."/>
            <person name="Urbanus J.H.M."/>
            <person name="Valle G."/>
            <person name="Van Dyck L."/>
            <person name="Verhasselt P."/>
            <person name="Vierendeels F."/>
            <person name="Vissers S."/>
            <person name="Voet M."/>
            <person name="Volckaert G."/>
            <person name="Wach A."/>
            <person name="Wambutt R."/>
            <person name="Wedler H."/>
            <person name="Zollner A."/>
            <person name="Hani J."/>
        </authorList>
    </citation>
    <scope>NUCLEOTIDE SEQUENCE [LARGE SCALE GENOMIC DNA]</scope>
    <source>
        <strain>ATCC 204508 / S288c</strain>
    </source>
</reference>
<reference key="3">
    <citation type="journal article" date="2014" name="G3 (Bethesda)">
        <title>The reference genome sequence of Saccharomyces cerevisiae: Then and now.</title>
        <authorList>
            <person name="Engel S.R."/>
            <person name="Dietrich F.S."/>
            <person name="Fisk D.G."/>
            <person name="Binkley G."/>
            <person name="Balakrishnan R."/>
            <person name="Costanzo M.C."/>
            <person name="Dwight S.S."/>
            <person name="Hitz B.C."/>
            <person name="Karra K."/>
            <person name="Nash R.S."/>
            <person name="Weng S."/>
            <person name="Wong E.D."/>
            <person name="Lloyd P."/>
            <person name="Skrzypek M.S."/>
            <person name="Miyasato S.R."/>
            <person name="Simison M."/>
            <person name="Cherry J.M."/>
        </authorList>
    </citation>
    <scope>GENOME REANNOTATION</scope>
    <source>
        <strain>ATCC 204508 / S288c</strain>
    </source>
</reference>
<reference key="4">
    <citation type="journal article" date="2007" name="Genome Res.">
        <title>Approaching a complete repository of sequence-verified protein-encoding clones for Saccharomyces cerevisiae.</title>
        <authorList>
            <person name="Hu Y."/>
            <person name="Rolfs A."/>
            <person name="Bhullar B."/>
            <person name="Murthy T.V.S."/>
            <person name="Zhu C."/>
            <person name="Berger M.F."/>
            <person name="Camargo A.A."/>
            <person name="Kelley F."/>
            <person name="McCarron S."/>
            <person name="Jepson D."/>
            <person name="Richardson A."/>
            <person name="Raphael J."/>
            <person name="Moreira D."/>
            <person name="Taycher E."/>
            <person name="Zuo D."/>
            <person name="Mohr S."/>
            <person name="Kane M.F."/>
            <person name="Williamson J."/>
            <person name="Simpson A.J.G."/>
            <person name="Bulyk M.L."/>
            <person name="Harlow E."/>
            <person name="Marsischky G."/>
            <person name="Kolodner R.D."/>
            <person name="LaBaer J."/>
        </authorList>
    </citation>
    <scope>NUCLEOTIDE SEQUENCE [GENOMIC DNA]</scope>
    <source>
        <strain>ATCC 204508 / S288c</strain>
    </source>
</reference>
<reference key="5">
    <citation type="journal article" date="2003" name="Nature">
        <title>Global analysis of protein localization in budding yeast.</title>
        <authorList>
            <person name="Huh W.-K."/>
            <person name="Falvo J.V."/>
            <person name="Gerke L.C."/>
            <person name="Carroll A.S."/>
            <person name="Howson R.W."/>
            <person name="Weissman J.S."/>
            <person name="O'Shea E.K."/>
        </authorList>
    </citation>
    <scope>SUBCELLULAR LOCATION [LARGE SCALE ANALYSIS]</scope>
</reference>
<reference key="6">
    <citation type="journal article" date="2003" name="Nature">
        <title>Global analysis of protein expression in yeast.</title>
        <authorList>
            <person name="Ghaemmaghami S."/>
            <person name="Huh W.-K."/>
            <person name="Bower K."/>
            <person name="Howson R.W."/>
            <person name="Belle A."/>
            <person name="Dephoure N."/>
            <person name="O'Shea E.K."/>
            <person name="Weissman J.S."/>
        </authorList>
    </citation>
    <scope>LEVEL OF PROTEIN EXPRESSION [LARGE SCALE ANALYSIS]</scope>
</reference>
<reference key="7">
    <citation type="journal article" date="2011" name="Traffic">
        <title>Yeast homologues of three BLOC-1 subunits highlight KxDL proteins as conserved interactors of BLOC-1.</title>
        <authorList>
            <person name="Hayes M.J."/>
            <person name="Bryon K."/>
            <person name="Satkurunathan J."/>
            <person name="Levine T.P."/>
        </authorList>
    </citation>
    <scope>IDENTIFICATION IN THE BLOC-1 COMPLEX</scope>
    <scope>FUNCTION</scope>
</reference>
<proteinExistence type="evidence at protein level"/>
<protein>
    <recommendedName>
        <fullName>Biogenesis of lysosome-related organelles complex 1 subunit SNN1</fullName>
        <shortName>BLOC-1 subunit SNN1</shortName>
    </recommendedName>
    <alternativeName>
        <fullName>SNAPIN-like protein 1</fullName>
    </alternativeName>
</protein>
<feature type="chain" id="PRO_0000203445" description="Biogenesis of lysosome-related organelles complex 1 subunit SNN1">
    <location>
        <begin position="1"/>
        <end position="102"/>
    </location>
</feature>
<feature type="coiled-coil region" evidence="1">
    <location>
        <begin position="71"/>
        <end position="102"/>
    </location>
</feature>
<sequence>MAGDSISADGTGVHPVELSVYSVLSTDLDGLYQSINELRESQALLILMLRKVRDKLRREGQVLYDPEPFKPTMDKLADLSARVRILSQRYEELQGNARALNN</sequence>
<name>SNAPN_YEAST</name>
<keyword id="KW-0175">Coiled coil</keyword>
<keyword id="KW-0967">Endosome</keyword>
<keyword id="KW-1185">Reference proteome</keyword>
<keyword id="KW-0813">Transport</keyword>
<organism>
    <name type="scientific">Saccharomyces cerevisiae (strain ATCC 204508 / S288c)</name>
    <name type="common">Baker's yeast</name>
    <dbReference type="NCBI Taxonomy" id="559292"/>
    <lineage>
        <taxon>Eukaryota</taxon>
        <taxon>Fungi</taxon>
        <taxon>Dikarya</taxon>
        <taxon>Ascomycota</taxon>
        <taxon>Saccharomycotina</taxon>
        <taxon>Saccharomycetes</taxon>
        <taxon>Saccharomycetales</taxon>
        <taxon>Saccharomycetaceae</taxon>
        <taxon>Saccharomyces</taxon>
    </lineage>
</organism>